<keyword id="KW-0010">Activator</keyword>
<keyword id="KW-0217">Developmental protein</keyword>
<keyword id="KW-0238">DNA-binding</keyword>
<keyword id="KW-0539">Nucleus</keyword>
<keyword id="KW-1185">Reference proteome</keyword>
<keyword id="KW-0804">Transcription</keyword>
<keyword id="KW-0805">Transcription regulation</keyword>
<feature type="chain" id="PRO_0000417698" description="Transcription factor LHW">
    <location>
        <begin position="1"/>
        <end position="650"/>
    </location>
</feature>
<feature type="domain" description="bHLH" evidence="2">
    <location>
        <begin position="455"/>
        <end position="504"/>
    </location>
</feature>
<feature type="region of interest" description="Disordered" evidence="3">
    <location>
        <begin position="381"/>
        <end position="417"/>
    </location>
</feature>
<feature type="region of interest" description="Disordered" evidence="3">
    <location>
        <begin position="431"/>
        <end position="470"/>
    </location>
</feature>
<feature type="short sequence motif" description="Nuclear localization signal" evidence="1">
    <location>
        <begin position="451"/>
        <end position="458"/>
    </location>
</feature>
<feature type="compositionally biased region" description="Low complexity" evidence="3">
    <location>
        <begin position="384"/>
        <end position="397"/>
    </location>
</feature>
<feature type="compositionally biased region" description="Basic and acidic residues" evidence="3">
    <location>
        <begin position="456"/>
        <end position="470"/>
    </location>
</feature>
<feature type="sequence conflict" description="In Ref. 5; BAH19848." evidence="5" ref="5">
    <original>G</original>
    <variation>R</variation>
    <location>
        <position position="168"/>
    </location>
</feature>
<feature type="sequence conflict" description="In Ref. 5; BAH19848." evidence="5" ref="5">
    <original>K</original>
    <variation>E</variation>
    <location>
        <position position="513"/>
    </location>
</feature>
<evidence type="ECO:0000250" key="1"/>
<evidence type="ECO:0000255" key="2">
    <source>
        <dbReference type="PROSITE-ProRule" id="PRU00981"/>
    </source>
</evidence>
<evidence type="ECO:0000256" key="3">
    <source>
        <dbReference type="SAM" id="MobiDB-lite"/>
    </source>
</evidence>
<evidence type="ECO:0000269" key="4">
    <source>
    </source>
</evidence>
<evidence type="ECO:0000305" key="5"/>
<comment type="function">
    <text evidence="4">Transcription activator that regulates root development; promotes the production of stele cells in roots. Coordinately controls the number of all vascular cell types by regulating the size of the pool of cells from which they arise.</text>
</comment>
<comment type="subunit">
    <text evidence="4">Homodimer. Can also interact with bHLH proteins.</text>
</comment>
<comment type="subcellular location">
    <subcellularLocation>
        <location evidence="2 4">Nucleus</location>
    </subcellularLocation>
</comment>
<comment type="tissue specificity">
    <text evidence="4">Expressed in both root and shoot meristems. Present in root tips.</text>
</comment>
<comment type="disruption phenotype">
    <text evidence="4">Loss of bilateral symmetry and reduced number of cells in the center of the root, resulting in roots with only single xylem and phloem poles and defect in lateral root formation.</text>
</comment>
<comment type="similarity">
    <text evidence="5">Belongs to the bHLH protein family. LHW subfamily.</text>
</comment>
<proteinExistence type="evidence at protein level"/>
<protein>
    <recommendedName>
        <fullName>Transcription factor LHW</fullName>
    </recommendedName>
    <alternativeName>
        <fullName>BHLH transcription factor delta</fullName>
        <shortName>bHLH delta</shortName>
    </alternativeName>
    <alternativeName>
        <fullName>Basic helix-loop-helix protein 156</fullName>
        <shortName>AtbHLH156</shortName>
        <shortName>bHLH 156</shortName>
    </alternativeName>
    <alternativeName>
        <fullName>Protein LONESOME HIGHWAY</fullName>
    </alternativeName>
    <alternativeName>
        <fullName>bHLH transcription factor bHLH156</fullName>
    </alternativeName>
</protein>
<sequence>MGVLLREALRSMCVNNQWSYAVFWKIGCQNSSLLIWEECYNETESSSNPRRLCGLGVDTQGNEKVQLLTNRMMLNNRIILVGEGLVGRAAFTGHHQWILANSFNRDVHPPEVINEMLLQFSAGIQTVAVFPVVPHGVVQLGSSLPIMENLGFVNDVKGLILQLGCVPGALLSENYRTYEPAADFIGVPVSRIIPSQGHKILQSSAFVAETSKQHFNSTGSSDHQMVEESPCNLVDEHEGGWQSTTGFLTAGEVAVPSNPDAWLNQNFSCMSNVDAAEQQQIPCEDISSKRSLGSDDLFDMLGLDDKNKGCDNSWGVSQMRTEVLTRELSDFRIIQEMDPEFGSSGYELSGTDHLLDAVVSGACSSTKQISDETSESCKTTLTKVSNSSVTTPSHSSPQGSQLFEKKHGQPLGPSSVYGSQISSWVEQAHSLKREGSPRMVNKNETAKPANNRKRLKPGENPRPRPKDRQMIQDRVKELREIIPNGAKCSIDALLERTIKHMLFLQNVSKHSDKLKQTGESKIMKEDGGGATWAFEVGSKSMVCPIVVEDINPPRIFQVEMLCEQRGFFLEIADWIRSLGLTILKGVIETRVDKIWARFTVEASRDVTRMEIFMQLVNILEQTMKCGGNSKTILDGIKATMPLPVTGGCSM</sequence>
<accession>Q9XIN0</accession>
<accession>B9DGI1</accession>
<accession>Q0WMN8</accession>
<reference key="1">
    <citation type="journal article" date="2003" name="Plant Cell">
        <title>Update on the basic helix-loop-helix transcription factor gene family in Arabidopsis thaliana.</title>
        <authorList>
            <person name="Bailey P.C."/>
            <person name="Martin C."/>
            <person name="Toledo-Ortiz G."/>
            <person name="Quail P.H."/>
            <person name="Huq E."/>
            <person name="Heim M.A."/>
            <person name="Jakoby M."/>
            <person name="Werber M."/>
            <person name="Weisshaar B."/>
        </authorList>
    </citation>
    <scope>NUCLEOTIDE SEQUENCE [MRNA]</scope>
    <scope>GENE FAMILY</scope>
    <scope>NOMENCLATURE</scope>
</reference>
<reference key="2">
    <citation type="journal article" date="1999" name="Nature">
        <title>Sequence and analysis of chromosome 2 of the plant Arabidopsis thaliana.</title>
        <authorList>
            <person name="Lin X."/>
            <person name="Kaul S."/>
            <person name="Rounsley S.D."/>
            <person name="Shea T.P."/>
            <person name="Benito M.-I."/>
            <person name="Town C.D."/>
            <person name="Fujii C.Y."/>
            <person name="Mason T.M."/>
            <person name="Bowman C.L."/>
            <person name="Barnstead M.E."/>
            <person name="Feldblyum T.V."/>
            <person name="Buell C.R."/>
            <person name="Ketchum K.A."/>
            <person name="Lee J.J."/>
            <person name="Ronning C.M."/>
            <person name="Koo H.L."/>
            <person name="Moffat K.S."/>
            <person name="Cronin L.A."/>
            <person name="Shen M."/>
            <person name="Pai G."/>
            <person name="Van Aken S."/>
            <person name="Umayam L."/>
            <person name="Tallon L.J."/>
            <person name="Gill J.E."/>
            <person name="Adams M.D."/>
            <person name="Carrera A.J."/>
            <person name="Creasy T.H."/>
            <person name="Goodman H.M."/>
            <person name="Somerville C.R."/>
            <person name="Copenhaver G.P."/>
            <person name="Preuss D."/>
            <person name="Nierman W.C."/>
            <person name="White O."/>
            <person name="Eisen J.A."/>
            <person name="Salzberg S.L."/>
            <person name="Fraser C.M."/>
            <person name="Venter J.C."/>
        </authorList>
    </citation>
    <scope>NUCLEOTIDE SEQUENCE [LARGE SCALE GENOMIC DNA]</scope>
    <source>
        <strain>cv. Columbia</strain>
    </source>
</reference>
<reference key="3">
    <citation type="journal article" date="2017" name="Plant J.">
        <title>Araport11: a complete reannotation of the Arabidopsis thaliana reference genome.</title>
        <authorList>
            <person name="Cheng C.Y."/>
            <person name="Krishnakumar V."/>
            <person name="Chan A.P."/>
            <person name="Thibaud-Nissen F."/>
            <person name="Schobel S."/>
            <person name="Town C.D."/>
        </authorList>
    </citation>
    <scope>GENOME REANNOTATION</scope>
    <source>
        <strain>cv. Columbia</strain>
    </source>
</reference>
<reference key="4">
    <citation type="submission" date="2009-03" db="EMBL/GenBank/DDBJ databases">
        <title>ORF cloning and analysis of Arabidopsis transcription factor genes.</title>
        <authorList>
            <person name="Fujita M."/>
            <person name="Mizukado S."/>
            <person name="Seki M."/>
            <person name="Shinozaki K."/>
            <person name="Mitsuda N."/>
            <person name="Takiguchi Y."/>
            <person name="Takagi M."/>
        </authorList>
    </citation>
    <scope>NUCLEOTIDE SEQUENCE [LARGE SCALE MRNA]</scope>
</reference>
<reference key="5">
    <citation type="journal article" date="2009" name="DNA Res.">
        <title>Analysis of multiple occurrences of alternative splicing events in Arabidopsis thaliana using novel sequenced full-length cDNAs.</title>
        <authorList>
            <person name="Iida K."/>
            <person name="Fukami-Kobayashi K."/>
            <person name="Toyoda A."/>
            <person name="Sakaki Y."/>
            <person name="Kobayashi M."/>
            <person name="Seki M."/>
            <person name="Shinozaki K."/>
        </authorList>
    </citation>
    <scope>NUCLEOTIDE SEQUENCE [LARGE SCALE MRNA]</scope>
    <source>
        <strain>cv. Columbia</strain>
        <tissue>Rosette leaf</tissue>
    </source>
</reference>
<reference key="6">
    <citation type="submission" date="2006-07" db="EMBL/GenBank/DDBJ databases">
        <title>Large-scale analysis of RIKEN Arabidopsis full-length (RAFL) cDNAs.</title>
        <authorList>
            <person name="Totoki Y."/>
            <person name="Seki M."/>
            <person name="Ishida J."/>
            <person name="Nakajima M."/>
            <person name="Enju A."/>
            <person name="Kamiya A."/>
            <person name="Narusaka M."/>
            <person name="Shin-i T."/>
            <person name="Nakagawa M."/>
            <person name="Sakamoto N."/>
            <person name="Oishi K."/>
            <person name="Kohara Y."/>
            <person name="Kobayashi M."/>
            <person name="Toyoda A."/>
            <person name="Sakaki Y."/>
            <person name="Sakurai T."/>
            <person name="Iida K."/>
            <person name="Akiyama K."/>
            <person name="Satou M."/>
            <person name="Toyoda T."/>
            <person name="Konagaya A."/>
            <person name="Carninci P."/>
            <person name="Kawai J."/>
            <person name="Hayashizaki Y."/>
            <person name="Shinozaki K."/>
        </authorList>
    </citation>
    <scope>NUCLEOTIDE SEQUENCE [LARGE SCALE MRNA] OF 332-650</scope>
    <source>
        <strain>cv. Columbia</strain>
    </source>
</reference>
<reference key="7">
    <citation type="journal article" date="2007" name="Development">
        <title>Regulation of the Arabidopsis root vascular initial population by LONESOME HIGHWAY.</title>
        <authorList>
            <person name="Ohashi-Ito K."/>
            <person name="Bergmann D.C."/>
        </authorList>
    </citation>
    <scope>FUNCTION</scope>
    <scope>DISRUPTION PHENOTYPE</scope>
    <scope>TISSUE SPECIFICITY</scope>
    <scope>SUBCELLULAR LOCATION</scope>
    <scope>HOMODIMER</scope>
    <scope>SUBUNIT</scope>
</reference>
<name>LHW_ARATH</name>
<dbReference type="EMBL" id="AJ576043">
    <property type="protein sequence ID" value="CAE09170.1"/>
    <property type="molecule type" value="mRNA"/>
</dbReference>
<dbReference type="EMBL" id="AC006233">
    <property type="protein sequence ID" value="AAD42006.1"/>
    <property type="molecule type" value="Genomic_DNA"/>
</dbReference>
<dbReference type="EMBL" id="CP002685">
    <property type="protein sequence ID" value="AEC07959.1"/>
    <property type="molecule type" value="Genomic_DNA"/>
</dbReference>
<dbReference type="EMBL" id="CP002685">
    <property type="protein sequence ID" value="AEC07960.1"/>
    <property type="molecule type" value="Genomic_DNA"/>
</dbReference>
<dbReference type="EMBL" id="AB493566">
    <property type="protein sequence ID" value="BAH30404.1"/>
    <property type="molecule type" value="mRNA"/>
</dbReference>
<dbReference type="EMBL" id="AK317162">
    <property type="protein sequence ID" value="BAH19848.1"/>
    <property type="molecule type" value="mRNA"/>
</dbReference>
<dbReference type="EMBL" id="AK229779">
    <property type="protein sequence ID" value="BAF01612.1"/>
    <property type="molecule type" value="mRNA"/>
</dbReference>
<dbReference type="PIR" id="D84670">
    <property type="entry name" value="D84670"/>
</dbReference>
<dbReference type="RefSeq" id="NP_001031430.1">
    <property type="nucleotide sequence ID" value="NM_001036353.1"/>
</dbReference>
<dbReference type="RefSeq" id="NP_565640.1">
    <property type="nucleotide sequence ID" value="NM_128281.2"/>
</dbReference>
<dbReference type="SMR" id="Q9XIN0"/>
<dbReference type="BioGRID" id="2617">
    <property type="interactions" value="21"/>
</dbReference>
<dbReference type="FunCoup" id="Q9XIN0">
    <property type="interactions" value="1704"/>
</dbReference>
<dbReference type="IntAct" id="Q9XIN0">
    <property type="interactions" value="13"/>
</dbReference>
<dbReference type="STRING" id="3702.Q9XIN0"/>
<dbReference type="PaxDb" id="3702-AT2G27230.2"/>
<dbReference type="ProteomicsDB" id="238437"/>
<dbReference type="EnsemblPlants" id="AT2G27230.1">
    <property type="protein sequence ID" value="AT2G27230.1"/>
    <property type="gene ID" value="AT2G27230"/>
</dbReference>
<dbReference type="EnsemblPlants" id="AT2G27230.2">
    <property type="protein sequence ID" value="AT2G27230.2"/>
    <property type="gene ID" value="AT2G27230"/>
</dbReference>
<dbReference type="GeneID" id="817265"/>
<dbReference type="Gramene" id="AT2G27230.1">
    <property type="protein sequence ID" value="AT2G27230.1"/>
    <property type="gene ID" value="AT2G27230"/>
</dbReference>
<dbReference type="Gramene" id="AT2G27230.2">
    <property type="protein sequence ID" value="AT2G27230.2"/>
    <property type="gene ID" value="AT2G27230"/>
</dbReference>
<dbReference type="KEGG" id="ath:AT2G27230"/>
<dbReference type="Araport" id="AT2G27230"/>
<dbReference type="TAIR" id="AT2G27230">
    <property type="gene designation" value="LHW"/>
</dbReference>
<dbReference type="eggNOG" id="ENOG502QSGF">
    <property type="taxonomic scope" value="Eukaryota"/>
</dbReference>
<dbReference type="HOGENOM" id="CLU_013463_1_1_1"/>
<dbReference type="InParanoid" id="Q9XIN0"/>
<dbReference type="OMA" id="MMESQIN"/>
<dbReference type="OrthoDB" id="1883654at2759"/>
<dbReference type="PhylomeDB" id="Q9XIN0"/>
<dbReference type="PRO" id="PR:Q9XIN0"/>
<dbReference type="Proteomes" id="UP000006548">
    <property type="component" value="Chromosome 2"/>
</dbReference>
<dbReference type="ExpressionAtlas" id="Q9XIN0">
    <property type="expression patterns" value="baseline and differential"/>
</dbReference>
<dbReference type="GO" id="GO:0005634">
    <property type="term" value="C:nucleus"/>
    <property type="evidence" value="ECO:0000314"/>
    <property type="project" value="TAIR"/>
</dbReference>
<dbReference type="GO" id="GO:0003677">
    <property type="term" value="F:DNA binding"/>
    <property type="evidence" value="ECO:0007669"/>
    <property type="project" value="UniProtKB-KW"/>
</dbReference>
<dbReference type="GO" id="GO:0003700">
    <property type="term" value="F:DNA-binding transcription factor activity"/>
    <property type="evidence" value="ECO:0000250"/>
    <property type="project" value="TAIR"/>
</dbReference>
<dbReference type="GO" id="GO:0042803">
    <property type="term" value="F:protein homodimerization activity"/>
    <property type="evidence" value="ECO:0000353"/>
    <property type="project" value="TAIR"/>
</dbReference>
<dbReference type="GO" id="GO:0010078">
    <property type="term" value="P:maintenance of root meristem identity"/>
    <property type="evidence" value="ECO:0000315"/>
    <property type="project" value="TAIR"/>
</dbReference>
<dbReference type="GO" id="GO:0045893">
    <property type="term" value="P:positive regulation of DNA-templated transcription"/>
    <property type="evidence" value="ECO:0000314"/>
    <property type="project" value="TAIR"/>
</dbReference>
<dbReference type="GO" id="GO:0006355">
    <property type="term" value="P:regulation of DNA-templated transcription"/>
    <property type="evidence" value="ECO:0000304"/>
    <property type="project" value="TAIR"/>
</dbReference>
<dbReference type="GO" id="GO:0048364">
    <property type="term" value="P:root development"/>
    <property type="evidence" value="ECO:0000315"/>
    <property type="project" value="TAIR"/>
</dbReference>
<dbReference type="GO" id="GO:0010479">
    <property type="term" value="P:stele development"/>
    <property type="evidence" value="ECO:0000315"/>
    <property type="project" value="TAIR"/>
</dbReference>
<dbReference type="GO" id="GO:0010089">
    <property type="term" value="P:xylem development"/>
    <property type="evidence" value="ECO:0000316"/>
    <property type="project" value="TAIR"/>
</dbReference>
<dbReference type="CDD" id="cd18915">
    <property type="entry name" value="bHLH_AtLHW_like"/>
    <property type="match status" value="1"/>
</dbReference>
<dbReference type="InterPro" id="IPR011598">
    <property type="entry name" value="bHLH_dom"/>
</dbReference>
<dbReference type="InterPro" id="IPR043561">
    <property type="entry name" value="LHW-like"/>
</dbReference>
<dbReference type="InterPro" id="IPR025610">
    <property type="entry name" value="MYC/MYB_N"/>
</dbReference>
<dbReference type="PANTHER" id="PTHR46196">
    <property type="entry name" value="TRANSCRIPTION FACTOR BHLH155-LIKE ISOFORM X1-RELATED"/>
    <property type="match status" value="1"/>
</dbReference>
<dbReference type="PANTHER" id="PTHR46196:SF4">
    <property type="entry name" value="TRANSCRIPTION FACTOR LHW"/>
    <property type="match status" value="1"/>
</dbReference>
<dbReference type="Pfam" id="PF14215">
    <property type="entry name" value="bHLH-MYC_N"/>
    <property type="match status" value="1"/>
</dbReference>
<dbReference type="Pfam" id="PF23176">
    <property type="entry name" value="bHLH_LHW"/>
    <property type="match status" value="1"/>
</dbReference>
<dbReference type="PROSITE" id="PS50888">
    <property type="entry name" value="BHLH"/>
    <property type="match status" value="1"/>
</dbReference>
<gene>
    <name type="primary">LHW</name>
    <name type="synonym">BHLH156</name>
    <name type="ordered locus">At2g27230</name>
    <name type="ORF">F12K2</name>
</gene>
<organism>
    <name type="scientific">Arabidopsis thaliana</name>
    <name type="common">Mouse-ear cress</name>
    <dbReference type="NCBI Taxonomy" id="3702"/>
    <lineage>
        <taxon>Eukaryota</taxon>
        <taxon>Viridiplantae</taxon>
        <taxon>Streptophyta</taxon>
        <taxon>Embryophyta</taxon>
        <taxon>Tracheophyta</taxon>
        <taxon>Spermatophyta</taxon>
        <taxon>Magnoliopsida</taxon>
        <taxon>eudicotyledons</taxon>
        <taxon>Gunneridae</taxon>
        <taxon>Pentapetalae</taxon>
        <taxon>rosids</taxon>
        <taxon>malvids</taxon>
        <taxon>Brassicales</taxon>
        <taxon>Brassicaceae</taxon>
        <taxon>Camelineae</taxon>
        <taxon>Arabidopsis</taxon>
    </lineage>
</organism>